<organism>
    <name type="scientific">Brucella suis biovar 1 (strain 1330)</name>
    <dbReference type="NCBI Taxonomy" id="204722"/>
    <lineage>
        <taxon>Bacteria</taxon>
        <taxon>Pseudomonadati</taxon>
        <taxon>Pseudomonadota</taxon>
        <taxon>Alphaproteobacteria</taxon>
        <taxon>Hyphomicrobiales</taxon>
        <taxon>Brucellaceae</taxon>
        <taxon>Brucella/Ochrobactrum group</taxon>
        <taxon>Brucella</taxon>
    </lineage>
</organism>
<sequence length="527" mass="57376">MRLRNFYSALALSAAVFAGPLYAAAPAMAAGTISGGFDVGPGGFQGNFNPLAATGGFTWLVTYFEPLVIYDDKLENIVGDLAKSFEISPDQLTYTFKLAHAKWHDGEPFTSKDAKFTFDLARNGKTGSVFAARLASIASVETPDEKTVVIKLKEPSPSMLDTLTKVMMLPEHALASIPPEQLAKNAWWSSTPIGTGPFKFNKYVADQYVELTANPDYRGGRPQVDKLINRYFADPAAAIAALRSGEIQFTYVDSNDVSTFSSDSAFRVIEGDSFVVNYVGFNQEVPLWKDLKVRQAFMHAINRDAIIQSLYGGAAKPANCVYVADRLVPKAIDAYAYDPQKARQLLDEAGWDKINGSKPITILTYYNSPLVANVLAAMQAMLAQVGINIVPRTVDTPTYNSIVYKQGGTADEFPLIFAGLQNGPDPSSINIGLNEKQIPPAGSNIMRIRMPAVTKALDAALAETNPAKRDARYQDVCKATNANLPWGTMWVANRYGVASSKLENFIWTPAPAGGPYQAHPEKWAILE</sequence>
<proteinExistence type="inferred from homology"/>
<evidence type="ECO:0000250" key="1"/>
<evidence type="ECO:0000255" key="2"/>
<evidence type="ECO:0000305" key="3"/>
<gene>
    <name type="ordered locus">BRA0409</name>
    <name type="ordered locus">BS1330_II0406</name>
</gene>
<comment type="function">
    <text evidence="1">Probably part of an ABC transporter complex that could be involved in peptide import.</text>
</comment>
<comment type="subunit">
    <text evidence="3">The complex is composed of two ATP-binding proteins (BRA0404 and BRA0405), two transmembrane proteins (BRA0407 and BRA0408) and a solute-binding protein (BRA0409).</text>
</comment>
<comment type="subcellular location">
    <subcellularLocation>
        <location evidence="3">Periplasm</location>
    </subcellularLocation>
</comment>
<comment type="similarity">
    <text evidence="3">Belongs to the bacterial solute-binding protein 5 family.</text>
</comment>
<name>Y3409_BRUSU</name>
<feature type="signal peptide" evidence="2">
    <location>
        <begin position="1"/>
        <end position="23"/>
    </location>
</feature>
<feature type="chain" id="PRO_0000328707" description="Putative ABC transporter peptide-binding protein BRA0409/BS1330_II0406">
    <location>
        <begin position="24"/>
        <end position="527"/>
    </location>
</feature>
<protein>
    <recommendedName>
        <fullName>Putative ABC transporter peptide-binding protein BRA0409/BS1330_II0406</fullName>
    </recommendedName>
</protein>
<keyword id="KW-0571">Peptide transport</keyword>
<keyword id="KW-0574">Periplasm</keyword>
<keyword id="KW-0653">Protein transport</keyword>
<keyword id="KW-0732">Signal</keyword>
<keyword id="KW-0813">Transport</keyword>
<accession>Q8FWN7</accession>
<accession>G0KCE7</accession>
<dbReference type="EMBL" id="AE014292">
    <property type="protein sequence ID" value="AAN33606.1"/>
    <property type="molecule type" value="Genomic_DNA"/>
</dbReference>
<dbReference type="EMBL" id="CP002998">
    <property type="protein sequence ID" value="AEM19885.1"/>
    <property type="molecule type" value="Genomic_DNA"/>
</dbReference>
<dbReference type="RefSeq" id="WP_002966198.1">
    <property type="nucleotide sequence ID" value="NZ_KN046805.1"/>
</dbReference>
<dbReference type="SMR" id="Q8FWN7"/>
<dbReference type="KEGG" id="bms:BRA0409"/>
<dbReference type="KEGG" id="bsi:BS1330_II0406"/>
<dbReference type="PATRIC" id="fig|204722.22.peg.3191"/>
<dbReference type="HOGENOM" id="CLU_017028_7_3_5"/>
<dbReference type="Proteomes" id="UP000007104">
    <property type="component" value="Chromosome II"/>
</dbReference>
<dbReference type="GO" id="GO:0043190">
    <property type="term" value="C:ATP-binding cassette (ABC) transporter complex"/>
    <property type="evidence" value="ECO:0007669"/>
    <property type="project" value="InterPro"/>
</dbReference>
<dbReference type="GO" id="GO:0030288">
    <property type="term" value="C:outer membrane-bounded periplasmic space"/>
    <property type="evidence" value="ECO:0007669"/>
    <property type="project" value="UniProtKB-ARBA"/>
</dbReference>
<dbReference type="GO" id="GO:1904680">
    <property type="term" value="F:peptide transmembrane transporter activity"/>
    <property type="evidence" value="ECO:0007669"/>
    <property type="project" value="TreeGrafter"/>
</dbReference>
<dbReference type="GO" id="GO:0015833">
    <property type="term" value="P:peptide transport"/>
    <property type="evidence" value="ECO:0007669"/>
    <property type="project" value="UniProtKB-KW"/>
</dbReference>
<dbReference type="GO" id="GO:0015031">
    <property type="term" value="P:protein transport"/>
    <property type="evidence" value="ECO:0007669"/>
    <property type="project" value="UniProtKB-KW"/>
</dbReference>
<dbReference type="CDD" id="cd00995">
    <property type="entry name" value="PBP2_NikA_DppA_OppA_like"/>
    <property type="match status" value="1"/>
</dbReference>
<dbReference type="Gene3D" id="3.90.76.10">
    <property type="entry name" value="Dipeptide-binding Protein, Domain 1"/>
    <property type="match status" value="1"/>
</dbReference>
<dbReference type="Gene3D" id="3.10.105.10">
    <property type="entry name" value="Dipeptide-binding Protein, Domain 3"/>
    <property type="match status" value="1"/>
</dbReference>
<dbReference type="Gene3D" id="3.40.190.10">
    <property type="entry name" value="Periplasmic binding protein-like II"/>
    <property type="match status" value="1"/>
</dbReference>
<dbReference type="InterPro" id="IPR030678">
    <property type="entry name" value="Peptide/Ni-bd"/>
</dbReference>
<dbReference type="InterPro" id="IPR039424">
    <property type="entry name" value="SBP_5"/>
</dbReference>
<dbReference type="InterPro" id="IPR000914">
    <property type="entry name" value="SBP_5_dom"/>
</dbReference>
<dbReference type="PANTHER" id="PTHR30290">
    <property type="entry name" value="PERIPLASMIC BINDING COMPONENT OF ABC TRANSPORTER"/>
    <property type="match status" value="1"/>
</dbReference>
<dbReference type="Pfam" id="PF00496">
    <property type="entry name" value="SBP_bac_5"/>
    <property type="match status" value="1"/>
</dbReference>
<dbReference type="PIRSF" id="PIRSF002741">
    <property type="entry name" value="MppA"/>
    <property type="match status" value="1"/>
</dbReference>
<dbReference type="SUPFAM" id="SSF53850">
    <property type="entry name" value="Periplasmic binding protein-like II"/>
    <property type="match status" value="1"/>
</dbReference>
<reference key="1">
    <citation type="journal article" date="2002" name="Proc. Natl. Acad. Sci. U.S.A.">
        <title>The Brucella suis genome reveals fundamental similarities between animal and plant pathogens and symbionts.</title>
        <authorList>
            <person name="Paulsen I.T."/>
            <person name="Seshadri R."/>
            <person name="Nelson K.E."/>
            <person name="Eisen J.A."/>
            <person name="Heidelberg J.F."/>
            <person name="Read T.D."/>
            <person name="Dodson R.J."/>
            <person name="Umayam L.A."/>
            <person name="Brinkac L.M."/>
            <person name="Beanan M.J."/>
            <person name="Daugherty S.C."/>
            <person name="DeBoy R.T."/>
            <person name="Durkin A.S."/>
            <person name="Kolonay J.F."/>
            <person name="Madupu R."/>
            <person name="Nelson W.C."/>
            <person name="Ayodeji B."/>
            <person name="Kraul M."/>
            <person name="Shetty J."/>
            <person name="Malek J.A."/>
            <person name="Van Aken S.E."/>
            <person name="Riedmuller S."/>
            <person name="Tettelin H."/>
            <person name="Gill S.R."/>
            <person name="White O."/>
            <person name="Salzberg S.L."/>
            <person name="Hoover D.L."/>
            <person name="Lindler L.E."/>
            <person name="Halling S.M."/>
            <person name="Boyle S.M."/>
            <person name="Fraser C.M."/>
        </authorList>
    </citation>
    <scope>NUCLEOTIDE SEQUENCE [LARGE SCALE GENOMIC DNA]</scope>
    <source>
        <strain>1330</strain>
    </source>
</reference>
<reference key="2">
    <citation type="journal article" date="2011" name="J. Bacteriol.">
        <title>Revised genome sequence of Brucella suis 1330.</title>
        <authorList>
            <person name="Tae H."/>
            <person name="Shallom S."/>
            <person name="Settlage R."/>
            <person name="Preston D."/>
            <person name="Adams L.G."/>
            <person name="Garner H.R."/>
        </authorList>
    </citation>
    <scope>NUCLEOTIDE SEQUENCE [LARGE SCALE GENOMIC DNA]</scope>
    <source>
        <strain>1330</strain>
    </source>
</reference>